<protein>
    <recommendedName>
        <fullName evidence="5">OVARIAN TUMOR DOMAIN-containing deubiquitinating enzyme 9</fullName>
        <shortName evidence="5">OTU domain-containing protein 9</shortName>
        <ecNumber evidence="4">3.4.19.12</ecNumber>
    </recommendedName>
    <alternativeName>
        <fullName evidence="5">Deubiquitinating enzyme OTU9</fullName>
    </alternativeName>
</protein>
<gene>
    <name evidence="5" type="primary">OTU9</name>
    <name evidence="8" type="ordered locus">At5g04250</name>
    <name evidence="10" type="ORF">F21E1.170</name>
    <name evidence="9" type="ORF">T19N18.9</name>
</gene>
<feature type="chain" id="PRO_0000447759" description="OVARIAN TUMOR DOMAIN-containing deubiquitinating enzyme 9">
    <location>
        <begin position="1"/>
        <end position="345"/>
    </location>
</feature>
<feature type="domain" description="OTU" evidence="3">
    <location>
        <begin position="204"/>
        <end position="328"/>
    </location>
</feature>
<feature type="active site" evidence="2">
    <location>
        <position position="212"/>
    </location>
</feature>
<feature type="active site" description="Nucleophile" evidence="1">
    <location>
        <position position="215"/>
    </location>
</feature>
<feature type="active site" evidence="1">
    <location>
        <position position="321"/>
    </location>
</feature>
<evidence type="ECO:0000250" key="1">
    <source>
        <dbReference type="UniProtKB" id="Q96G74"/>
    </source>
</evidence>
<evidence type="ECO:0000255" key="2"/>
<evidence type="ECO:0000255" key="3">
    <source>
        <dbReference type="PROSITE-ProRule" id="PRU00139"/>
    </source>
</evidence>
<evidence type="ECO:0000269" key="4">
    <source>
    </source>
</evidence>
<evidence type="ECO:0000303" key="5">
    <source>
    </source>
</evidence>
<evidence type="ECO:0000305" key="6"/>
<evidence type="ECO:0000305" key="7">
    <source>
    </source>
</evidence>
<evidence type="ECO:0000312" key="8">
    <source>
        <dbReference type="Araport" id="AT5G04250"/>
    </source>
</evidence>
<evidence type="ECO:0000312" key="9">
    <source>
        <dbReference type="EMBL" id="AED90718.1"/>
    </source>
</evidence>
<evidence type="ECO:0000312" key="10">
    <source>
        <dbReference type="EMBL" id="CAC05507.1"/>
    </source>
</evidence>
<reference key="1">
    <citation type="journal article" date="2014" name="Front. Plant Sci.">
        <title>Distinct phylogenetic relationships and biochemical properties of Arabidopsis ovarian tumor-related deubiquitinases support their functional differentiation.</title>
        <authorList>
            <person name="Radjacommare R."/>
            <person name="Usharani R."/>
            <person name="Kuo C.-H."/>
            <person name="Fu H."/>
        </authorList>
    </citation>
    <scope>NUCLEOTIDE SEQUENCE [MRNA]</scope>
    <scope>FUNCTION</scope>
    <scope>BIOPHYSICOCHEMICAL PROPERTIES</scope>
    <scope>CATALYTIC ACTIVITY</scope>
    <scope>GENE FAMILY</scope>
    <scope>NOMENCLATURE</scope>
    <source>
        <strain>cv. Columbia</strain>
    </source>
</reference>
<reference key="2">
    <citation type="journal article" date="2000" name="Nature">
        <title>Sequence and analysis of chromosome 5 of the plant Arabidopsis thaliana.</title>
        <authorList>
            <person name="Tabata S."/>
            <person name="Kaneko T."/>
            <person name="Nakamura Y."/>
            <person name="Kotani H."/>
            <person name="Kato T."/>
            <person name="Asamizu E."/>
            <person name="Miyajima N."/>
            <person name="Sasamoto S."/>
            <person name="Kimura T."/>
            <person name="Hosouchi T."/>
            <person name="Kawashima K."/>
            <person name="Kohara M."/>
            <person name="Matsumoto M."/>
            <person name="Matsuno A."/>
            <person name="Muraki A."/>
            <person name="Nakayama S."/>
            <person name="Nakazaki N."/>
            <person name="Naruo K."/>
            <person name="Okumura S."/>
            <person name="Shinpo S."/>
            <person name="Takeuchi C."/>
            <person name="Wada T."/>
            <person name="Watanabe A."/>
            <person name="Yamada M."/>
            <person name="Yasuda M."/>
            <person name="Sato S."/>
            <person name="de la Bastide M."/>
            <person name="Huang E."/>
            <person name="Spiegel L."/>
            <person name="Gnoj L."/>
            <person name="O'Shaughnessy A."/>
            <person name="Preston R."/>
            <person name="Habermann K."/>
            <person name="Murray J."/>
            <person name="Johnson D."/>
            <person name="Rohlfing T."/>
            <person name="Nelson J."/>
            <person name="Stoneking T."/>
            <person name="Pepin K."/>
            <person name="Spieth J."/>
            <person name="Sekhon M."/>
            <person name="Armstrong J."/>
            <person name="Becker M."/>
            <person name="Belter E."/>
            <person name="Cordum H."/>
            <person name="Cordes M."/>
            <person name="Courtney L."/>
            <person name="Courtney W."/>
            <person name="Dante M."/>
            <person name="Du H."/>
            <person name="Edwards J."/>
            <person name="Fryman J."/>
            <person name="Haakensen B."/>
            <person name="Lamar E."/>
            <person name="Latreille P."/>
            <person name="Leonard S."/>
            <person name="Meyer R."/>
            <person name="Mulvaney E."/>
            <person name="Ozersky P."/>
            <person name="Riley A."/>
            <person name="Strowmatt C."/>
            <person name="Wagner-McPherson C."/>
            <person name="Wollam A."/>
            <person name="Yoakum M."/>
            <person name="Bell M."/>
            <person name="Dedhia N."/>
            <person name="Parnell L."/>
            <person name="Shah R."/>
            <person name="Rodriguez M."/>
            <person name="Hoon See L."/>
            <person name="Vil D."/>
            <person name="Baker J."/>
            <person name="Kirchoff K."/>
            <person name="Toth K."/>
            <person name="King L."/>
            <person name="Bahret A."/>
            <person name="Miller B."/>
            <person name="Marra M.A."/>
            <person name="Martienssen R."/>
            <person name="McCombie W.R."/>
            <person name="Wilson R.K."/>
            <person name="Murphy G."/>
            <person name="Bancroft I."/>
            <person name="Volckaert G."/>
            <person name="Wambutt R."/>
            <person name="Duesterhoeft A."/>
            <person name="Stiekema W."/>
            <person name="Pohl T."/>
            <person name="Entian K.-D."/>
            <person name="Terryn N."/>
            <person name="Hartley N."/>
            <person name="Bent E."/>
            <person name="Johnson S."/>
            <person name="Langham S.-A."/>
            <person name="McCullagh B."/>
            <person name="Robben J."/>
            <person name="Grymonprez B."/>
            <person name="Zimmermann W."/>
            <person name="Ramsperger U."/>
            <person name="Wedler H."/>
            <person name="Balke K."/>
            <person name="Wedler E."/>
            <person name="Peters S."/>
            <person name="van Staveren M."/>
            <person name="Dirkse W."/>
            <person name="Mooijman P."/>
            <person name="Klein Lankhorst R."/>
            <person name="Weitzenegger T."/>
            <person name="Bothe G."/>
            <person name="Rose M."/>
            <person name="Hauf J."/>
            <person name="Berneiser S."/>
            <person name="Hempel S."/>
            <person name="Feldpausch M."/>
            <person name="Lamberth S."/>
            <person name="Villarroel R."/>
            <person name="Gielen J."/>
            <person name="Ardiles W."/>
            <person name="Bents O."/>
            <person name="Lemcke K."/>
            <person name="Kolesov G."/>
            <person name="Mayer K.F.X."/>
            <person name="Rudd S."/>
            <person name="Schoof H."/>
            <person name="Schueller C."/>
            <person name="Zaccaria P."/>
            <person name="Mewes H.-W."/>
            <person name="Bevan M."/>
            <person name="Fransz P.F."/>
        </authorList>
    </citation>
    <scope>NUCLEOTIDE SEQUENCE [LARGE SCALE GENOMIC DNA]</scope>
    <source>
        <strain>cv. Columbia</strain>
    </source>
</reference>
<reference key="3">
    <citation type="journal article" date="2017" name="Plant J.">
        <title>Araport11: a complete reannotation of the Arabidopsis thaliana reference genome.</title>
        <authorList>
            <person name="Cheng C.Y."/>
            <person name="Krishnakumar V."/>
            <person name="Chan A.P."/>
            <person name="Thibaud-Nissen F."/>
            <person name="Schobel S."/>
            <person name="Town C.D."/>
        </authorList>
    </citation>
    <scope>GENOME REANNOTATION</scope>
    <source>
        <strain>cv. Columbia</strain>
    </source>
</reference>
<reference key="4">
    <citation type="submission" date="2005-03" db="EMBL/GenBank/DDBJ databases">
        <title>Large-scale analysis of RIKEN Arabidopsis full-length (RAFL) cDNAs.</title>
        <authorList>
            <person name="Totoki Y."/>
            <person name="Seki M."/>
            <person name="Ishida J."/>
            <person name="Nakajima M."/>
            <person name="Enju A."/>
            <person name="Kamiya A."/>
            <person name="Narusaka M."/>
            <person name="Shin-i T."/>
            <person name="Nakagawa M."/>
            <person name="Sakamoto N."/>
            <person name="Oishi K."/>
            <person name="Kohara Y."/>
            <person name="Kobayashi M."/>
            <person name="Toyoda A."/>
            <person name="Sakaki Y."/>
            <person name="Sakurai T."/>
            <person name="Iida K."/>
            <person name="Akiyama K."/>
            <person name="Satou M."/>
            <person name="Toyoda T."/>
            <person name="Konagaya A."/>
            <person name="Carninci P."/>
            <person name="Kawai J."/>
            <person name="Hayashizaki Y."/>
            <person name="Shinozaki K."/>
        </authorList>
    </citation>
    <scope>NUCLEOTIDE SEQUENCE [LARGE SCALE MRNA]</scope>
    <source>
        <strain>cv. Columbia</strain>
    </source>
</reference>
<reference key="5">
    <citation type="submission" date="2006-03" db="EMBL/GenBank/DDBJ databases">
        <title>Arabidopsis ORF clones.</title>
        <authorList>
            <person name="Shinn P."/>
            <person name="Chen H."/>
            <person name="Kim C.J."/>
            <person name="Ecker J.R."/>
        </authorList>
    </citation>
    <scope>NUCLEOTIDE SEQUENCE [LARGE SCALE MRNA]</scope>
    <source>
        <strain>cv. Columbia</strain>
    </source>
</reference>
<reference key="6">
    <citation type="submission" date="2002-03" db="EMBL/GenBank/DDBJ databases">
        <title>Full-length cDNA from Arabidopsis thaliana.</title>
        <authorList>
            <person name="Brover V.V."/>
            <person name="Troukhan M.E."/>
            <person name="Alexandrov N.A."/>
            <person name="Lu Y.-P."/>
            <person name="Flavell R.B."/>
            <person name="Feldmann K.A."/>
        </authorList>
    </citation>
    <scope>NUCLEOTIDE SEQUENCE [LARGE SCALE MRNA]</scope>
</reference>
<organism>
    <name type="scientific">Arabidopsis thaliana</name>
    <name type="common">Mouse-ear cress</name>
    <dbReference type="NCBI Taxonomy" id="3702"/>
    <lineage>
        <taxon>Eukaryota</taxon>
        <taxon>Viridiplantae</taxon>
        <taxon>Streptophyta</taxon>
        <taxon>Embryophyta</taxon>
        <taxon>Tracheophyta</taxon>
        <taxon>Spermatophyta</taxon>
        <taxon>Magnoliopsida</taxon>
        <taxon>eudicotyledons</taxon>
        <taxon>Gunneridae</taxon>
        <taxon>Pentapetalae</taxon>
        <taxon>rosids</taxon>
        <taxon>malvids</taxon>
        <taxon>Brassicales</taxon>
        <taxon>Brassicaceae</taxon>
        <taxon>Camelineae</taxon>
        <taxon>Arabidopsis</taxon>
    </lineage>
</organism>
<name>OTU9_ARATH</name>
<comment type="function">
    <text evidence="4 7">Hydrolase that can remove conjugated ubiquitin from proteins in vitro and may therefore play an important regulatory role at the level of protein turnover by preventing degradation (Probable). Cysteine protease with a preference for 'Lys-63' and 'Lys-48' -linked ubiquitin (UB) tetramers as substrates (PubMed:24659992). Also cleaves RUB-GST fusion (PubMed:24659992).</text>
</comment>
<comment type="catalytic activity">
    <reaction evidence="4">
        <text>Thiol-dependent hydrolysis of ester, thioester, amide, peptide and isopeptide bonds formed by the C-terminal Gly of ubiquitin (a 76-residue protein attached to proteins as an intracellular targeting signal).</text>
        <dbReference type="EC" id="3.4.19.12"/>
    </reaction>
</comment>
<comment type="biophysicochemical properties">
    <phDependence>
        <text evidence="4">Optimum pH is 7.</text>
    </phDependence>
</comment>
<comment type="similarity">
    <text evidence="6">Belongs to the peptidase C85 family.</text>
</comment>
<comment type="sequence caution" evidence="6">
    <conflict type="erroneous gene model prediction">
        <sequence resource="EMBL-CDS" id="CAC05507"/>
    </conflict>
</comment>
<dbReference type="EC" id="3.4.19.12" evidence="4"/>
<dbReference type="EMBL" id="JQ013455">
    <property type="protein sequence ID" value="AFS88957.1"/>
    <property type="molecule type" value="mRNA"/>
</dbReference>
<dbReference type="EMBL" id="AL391716">
    <property type="protein sequence ID" value="CAC05507.1"/>
    <property type="status" value="ALT_SEQ"/>
    <property type="molecule type" value="Genomic_DNA"/>
</dbReference>
<dbReference type="EMBL" id="CP002688">
    <property type="protein sequence ID" value="AED90718.1"/>
    <property type="molecule type" value="Genomic_DNA"/>
</dbReference>
<dbReference type="EMBL" id="CP002688">
    <property type="protein sequence ID" value="AED90719.1"/>
    <property type="molecule type" value="Genomic_DNA"/>
</dbReference>
<dbReference type="EMBL" id="AK221616">
    <property type="protein sequence ID" value="BAD95211.1"/>
    <property type="molecule type" value="mRNA"/>
</dbReference>
<dbReference type="EMBL" id="BT024878">
    <property type="protein sequence ID" value="ABD85149.1"/>
    <property type="molecule type" value="mRNA"/>
</dbReference>
<dbReference type="EMBL" id="AY086961">
    <property type="protein sequence ID" value="AAM64524.1"/>
    <property type="molecule type" value="mRNA"/>
</dbReference>
<dbReference type="RefSeq" id="NP_001119168.1">
    <property type="nucleotide sequence ID" value="NM_001125696.1"/>
</dbReference>
<dbReference type="RefSeq" id="NP_568136.1">
    <property type="nucleotide sequence ID" value="NM_120507.5"/>
</dbReference>
<dbReference type="SMR" id="Q8LBW2"/>
<dbReference type="FunCoup" id="Q8LBW2">
    <property type="interactions" value="11"/>
</dbReference>
<dbReference type="STRING" id="3702.Q8LBW2"/>
<dbReference type="MEROPS" id="C85.A03"/>
<dbReference type="iPTMnet" id="Q8LBW2"/>
<dbReference type="PaxDb" id="3702-AT5G04250.2"/>
<dbReference type="ProteomicsDB" id="191835"/>
<dbReference type="EnsemblPlants" id="AT5G04250.1">
    <property type="protein sequence ID" value="AT5G04250.1"/>
    <property type="gene ID" value="AT5G04250"/>
</dbReference>
<dbReference type="EnsemblPlants" id="AT5G04250.2">
    <property type="protein sequence ID" value="AT5G04250.2"/>
    <property type="gene ID" value="AT5G04250"/>
</dbReference>
<dbReference type="GeneID" id="830304"/>
<dbReference type="Gramene" id="AT5G04250.1">
    <property type="protein sequence ID" value="AT5G04250.1"/>
    <property type="gene ID" value="AT5G04250"/>
</dbReference>
<dbReference type="Gramene" id="AT5G04250.2">
    <property type="protein sequence ID" value="AT5G04250.2"/>
    <property type="gene ID" value="AT5G04250"/>
</dbReference>
<dbReference type="KEGG" id="ath:AT5G04250"/>
<dbReference type="Araport" id="AT5G04250"/>
<dbReference type="TAIR" id="AT5G04250"/>
<dbReference type="eggNOG" id="KOG2605">
    <property type="taxonomic scope" value="Eukaryota"/>
</dbReference>
<dbReference type="HOGENOM" id="CLU_044001_0_0_1"/>
<dbReference type="InParanoid" id="Q8LBW2"/>
<dbReference type="OMA" id="HIPRTNE"/>
<dbReference type="OrthoDB" id="415023at2759"/>
<dbReference type="PhylomeDB" id="Q8LBW2"/>
<dbReference type="PRO" id="PR:Q8LBW2"/>
<dbReference type="Proteomes" id="UP000006548">
    <property type="component" value="Chromosome 5"/>
</dbReference>
<dbReference type="ExpressionAtlas" id="Q8LBW2">
    <property type="expression patterns" value="baseline and differential"/>
</dbReference>
<dbReference type="GO" id="GO:0004843">
    <property type="term" value="F:cysteine-type deubiquitinase activity"/>
    <property type="evidence" value="ECO:0007669"/>
    <property type="project" value="UniProtKB-EC"/>
</dbReference>
<dbReference type="CDD" id="cd22751">
    <property type="entry name" value="OTU_plant_OTU9-like"/>
    <property type="match status" value="1"/>
</dbReference>
<dbReference type="FunFam" id="3.90.70.80:FF:000001">
    <property type="entry name" value="OTU domain-containing protein"/>
    <property type="match status" value="1"/>
</dbReference>
<dbReference type="Gene3D" id="3.90.70.80">
    <property type="match status" value="1"/>
</dbReference>
<dbReference type="InterPro" id="IPR003323">
    <property type="entry name" value="OTU_dom"/>
</dbReference>
<dbReference type="InterPro" id="IPR038765">
    <property type="entry name" value="Papain-like_cys_pep_sf"/>
</dbReference>
<dbReference type="InterPro" id="IPR050704">
    <property type="entry name" value="Peptidase_C85-like"/>
</dbReference>
<dbReference type="PANTHER" id="PTHR12419">
    <property type="entry name" value="OTU DOMAIN CONTAINING PROTEIN"/>
    <property type="match status" value="1"/>
</dbReference>
<dbReference type="PANTHER" id="PTHR12419:SF111">
    <property type="entry name" value="OVARIAN TUMOR DOMAIN-CONTAINING DEUBIQUITINATING ENZYME 9"/>
    <property type="match status" value="1"/>
</dbReference>
<dbReference type="Pfam" id="PF02338">
    <property type="entry name" value="OTU"/>
    <property type="match status" value="1"/>
</dbReference>
<dbReference type="SUPFAM" id="SSF54001">
    <property type="entry name" value="Cysteine proteinases"/>
    <property type="match status" value="1"/>
</dbReference>
<dbReference type="PROSITE" id="PS50802">
    <property type="entry name" value="OTU"/>
    <property type="match status" value="1"/>
</dbReference>
<keyword id="KW-0378">Hydrolase</keyword>
<keyword id="KW-1185">Reference proteome</keyword>
<keyword id="KW-0833">Ubl conjugation pathway</keyword>
<accession>Q8LBW2</accession>
<accession>Q9FYD6</accession>
<proteinExistence type="evidence at protein level"/>
<sequence>MGYEPDPDALRWGLHDLEVCTLTNAGSCSSVTRYESGGGGTQGYVREGYNQPVTGYVDNDAVIAQFYQDELSRVARAEASGINSLSPTSVVAQDWPHPHQGQENQGEAIDITQESDILHNHNGNMEDKNVARIRFEGGQSSPSRDDDSVCSVEIEEESWSEVGKRLNQMIPIAHVPKINGELPSEDEQISDHERLFQRLQLYGLVENKIEGDGNCQFRSLSDQLYRSPEHHNFVREQVVNQLAYNREIYEGYVPMAYNDYLKAMKRNGEWGDHVTLQAAADLFGVRMFVITSFKDTCYIEILPHFQKSNRLICLSFWAEVHYNSIYPEGELPIPEGKKKKKYWVF</sequence>